<protein>
    <recommendedName>
        <fullName evidence="1">Probable cytosol aminopeptidase</fullName>
        <ecNumber evidence="1">3.4.11.1</ecNumber>
    </recommendedName>
    <alternativeName>
        <fullName evidence="1">Leucine aminopeptidase</fullName>
        <shortName evidence="1">LAP</shortName>
        <ecNumber evidence="1">3.4.11.10</ecNumber>
    </alternativeName>
    <alternativeName>
        <fullName evidence="1">Leucyl aminopeptidase</fullName>
    </alternativeName>
</protein>
<name>AMPA_CLOTE</name>
<accession>Q893F8</accession>
<reference key="1">
    <citation type="journal article" date="2003" name="Proc. Natl. Acad. Sci. U.S.A.">
        <title>The genome sequence of Clostridium tetani, the causative agent of tetanus disease.</title>
        <authorList>
            <person name="Brueggemann H."/>
            <person name="Baeumer S."/>
            <person name="Fricke W.F."/>
            <person name="Wiezer A."/>
            <person name="Liesegang H."/>
            <person name="Decker I."/>
            <person name="Herzberg C."/>
            <person name="Martinez-Arias R."/>
            <person name="Merkl R."/>
            <person name="Henne A."/>
            <person name="Gottschalk G."/>
        </authorList>
    </citation>
    <scope>NUCLEOTIDE SEQUENCE [LARGE SCALE GENOMIC DNA]</scope>
    <source>
        <strain>Massachusetts / E88</strain>
    </source>
</reference>
<feature type="chain" id="PRO_0000165744" description="Probable cytosol aminopeptidase">
    <location>
        <begin position="1"/>
        <end position="481"/>
    </location>
</feature>
<feature type="active site" evidence="1">
    <location>
        <position position="259"/>
    </location>
</feature>
<feature type="active site" evidence="1">
    <location>
        <position position="333"/>
    </location>
</feature>
<feature type="binding site" evidence="1">
    <location>
        <position position="247"/>
    </location>
    <ligand>
        <name>Mn(2+)</name>
        <dbReference type="ChEBI" id="CHEBI:29035"/>
        <label>2</label>
    </ligand>
</feature>
<feature type="binding site" evidence="1">
    <location>
        <position position="252"/>
    </location>
    <ligand>
        <name>Mn(2+)</name>
        <dbReference type="ChEBI" id="CHEBI:29035"/>
        <label>1</label>
    </ligand>
</feature>
<feature type="binding site" evidence="1">
    <location>
        <position position="252"/>
    </location>
    <ligand>
        <name>Mn(2+)</name>
        <dbReference type="ChEBI" id="CHEBI:29035"/>
        <label>2</label>
    </ligand>
</feature>
<feature type="binding site" evidence="1">
    <location>
        <position position="270"/>
    </location>
    <ligand>
        <name>Mn(2+)</name>
        <dbReference type="ChEBI" id="CHEBI:29035"/>
        <label>2</label>
    </ligand>
</feature>
<feature type="binding site" evidence="1">
    <location>
        <position position="329"/>
    </location>
    <ligand>
        <name>Mn(2+)</name>
        <dbReference type="ChEBI" id="CHEBI:29035"/>
        <label>1</label>
    </ligand>
</feature>
<feature type="binding site" evidence="1">
    <location>
        <position position="331"/>
    </location>
    <ligand>
        <name>Mn(2+)</name>
        <dbReference type="ChEBI" id="CHEBI:29035"/>
        <label>1</label>
    </ligand>
</feature>
<feature type="binding site" evidence="1">
    <location>
        <position position="331"/>
    </location>
    <ligand>
        <name>Mn(2+)</name>
        <dbReference type="ChEBI" id="CHEBI:29035"/>
        <label>2</label>
    </ligand>
</feature>
<comment type="function">
    <text evidence="1">Presumably involved in the processing and regular turnover of intracellular proteins. Catalyzes the removal of unsubstituted N-terminal amino acids from various peptides.</text>
</comment>
<comment type="catalytic activity">
    <reaction evidence="1">
        <text>Release of an N-terminal amino acid, Xaa-|-Yaa-, in which Xaa is preferably Leu, but may be other amino acids including Pro although not Arg or Lys, and Yaa may be Pro. Amino acid amides and methyl esters are also readily hydrolyzed, but rates on arylamides are exceedingly low.</text>
        <dbReference type="EC" id="3.4.11.1"/>
    </reaction>
</comment>
<comment type="catalytic activity">
    <reaction evidence="1">
        <text>Release of an N-terminal amino acid, preferentially leucine, but not glutamic or aspartic acids.</text>
        <dbReference type="EC" id="3.4.11.10"/>
    </reaction>
</comment>
<comment type="cofactor">
    <cofactor evidence="1">
        <name>Mn(2+)</name>
        <dbReference type="ChEBI" id="CHEBI:29035"/>
    </cofactor>
    <text evidence="1">Binds 2 manganese ions per subunit.</text>
</comment>
<comment type="subcellular location">
    <subcellularLocation>
        <location evidence="1">Cytoplasm</location>
    </subcellularLocation>
</comment>
<comment type="similarity">
    <text evidence="1">Belongs to the peptidase M17 family.</text>
</comment>
<proteinExistence type="inferred from homology"/>
<dbReference type="EC" id="3.4.11.1" evidence="1"/>
<dbReference type="EC" id="3.4.11.10" evidence="1"/>
<dbReference type="EMBL" id="AE015927">
    <property type="protein sequence ID" value="AAO36384.1"/>
    <property type="molecule type" value="Genomic_DNA"/>
</dbReference>
<dbReference type="RefSeq" id="WP_011100044.1">
    <property type="nucleotide sequence ID" value="NC_004557.1"/>
</dbReference>
<dbReference type="SMR" id="Q893F8"/>
<dbReference type="STRING" id="212717.CTC_01866"/>
<dbReference type="MEROPS" id="M17.013"/>
<dbReference type="GeneID" id="24253534"/>
<dbReference type="KEGG" id="ctc:CTC_01866"/>
<dbReference type="HOGENOM" id="CLU_013734_6_3_9"/>
<dbReference type="OrthoDB" id="9809354at2"/>
<dbReference type="Proteomes" id="UP000001412">
    <property type="component" value="Chromosome"/>
</dbReference>
<dbReference type="GO" id="GO:0005737">
    <property type="term" value="C:cytoplasm"/>
    <property type="evidence" value="ECO:0007669"/>
    <property type="project" value="UniProtKB-SubCell"/>
</dbReference>
<dbReference type="GO" id="GO:0030145">
    <property type="term" value="F:manganese ion binding"/>
    <property type="evidence" value="ECO:0007669"/>
    <property type="project" value="UniProtKB-UniRule"/>
</dbReference>
<dbReference type="GO" id="GO:0070006">
    <property type="term" value="F:metalloaminopeptidase activity"/>
    <property type="evidence" value="ECO:0007669"/>
    <property type="project" value="InterPro"/>
</dbReference>
<dbReference type="GO" id="GO:0006508">
    <property type="term" value="P:proteolysis"/>
    <property type="evidence" value="ECO:0007669"/>
    <property type="project" value="UniProtKB-KW"/>
</dbReference>
<dbReference type="CDD" id="cd00433">
    <property type="entry name" value="Peptidase_M17"/>
    <property type="match status" value="1"/>
</dbReference>
<dbReference type="Gene3D" id="3.40.220.10">
    <property type="entry name" value="Leucine Aminopeptidase, subunit E, domain 1"/>
    <property type="match status" value="1"/>
</dbReference>
<dbReference type="Gene3D" id="3.40.630.10">
    <property type="entry name" value="Zn peptidases"/>
    <property type="match status" value="1"/>
</dbReference>
<dbReference type="HAMAP" id="MF_00181">
    <property type="entry name" value="Cytosol_peptidase_M17"/>
    <property type="match status" value="1"/>
</dbReference>
<dbReference type="InterPro" id="IPR011356">
    <property type="entry name" value="Leucine_aapep/pepB"/>
</dbReference>
<dbReference type="InterPro" id="IPR043472">
    <property type="entry name" value="Macro_dom-like"/>
</dbReference>
<dbReference type="InterPro" id="IPR000819">
    <property type="entry name" value="Peptidase_M17_C"/>
</dbReference>
<dbReference type="InterPro" id="IPR023042">
    <property type="entry name" value="Peptidase_M17_leu_NH2_pept"/>
</dbReference>
<dbReference type="InterPro" id="IPR008283">
    <property type="entry name" value="Peptidase_M17_N"/>
</dbReference>
<dbReference type="NCBIfam" id="NF002073">
    <property type="entry name" value="PRK00913.1-2"/>
    <property type="match status" value="1"/>
</dbReference>
<dbReference type="NCBIfam" id="NF002074">
    <property type="entry name" value="PRK00913.1-4"/>
    <property type="match status" value="1"/>
</dbReference>
<dbReference type="NCBIfam" id="NF002083">
    <property type="entry name" value="PRK00913.3-5"/>
    <property type="match status" value="1"/>
</dbReference>
<dbReference type="PANTHER" id="PTHR11963:SF23">
    <property type="entry name" value="CYTOSOL AMINOPEPTIDASE"/>
    <property type="match status" value="1"/>
</dbReference>
<dbReference type="PANTHER" id="PTHR11963">
    <property type="entry name" value="LEUCINE AMINOPEPTIDASE-RELATED"/>
    <property type="match status" value="1"/>
</dbReference>
<dbReference type="Pfam" id="PF00883">
    <property type="entry name" value="Peptidase_M17"/>
    <property type="match status" value="1"/>
</dbReference>
<dbReference type="Pfam" id="PF02789">
    <property type="entry name" value="Peptidase_M17_N"/>
    <property type="match status" value="1"/>
</dbReference>
<dbReference type="PRINTS" id="PR00481">
    <property type="entry name" value="LAMNOPPTDASE"/>
</dbReference>
<dbReference type="SUPFAM" id="SSF52949">
    <property type="entry name" value="Macro domain-like"/>
    <property type="match status" value="1"/>
</dbReference>
<dbReference type="SUPFAM" id="SSF53187">
    <property type="entry name" value="Zn-dependent exopeptidases"/>
    <property type="match status" value="1"/>
</dbReference>
<dbReference type="PROSITE" id="PS00631">
    <property type="entry name" value="CYTOSOL_AP"/>
    <property type="match status" value="1"/>
</dbReference>
<organism>
    <name type="scientific">Clostridium tetani (strain Massachusetts / E88)</name>
    <dbReference type="NCBI Taxonomy" id="212717"/>
    <lineage>
        <taxon>Bacteria</taxon>
        <taxon>Bacillati</taxon>
        <taxon>Bacillota</taxon>
        <taxon>Clostridia</taxon>
        <taxon>Eubacteriales</taxon>
        <taxon>Clostridiaceae</taxon>
        <taxon>Clostridium</taxon>
    </lineage>
</organism>
<gene>
    <name evidence="1" type="primary">pepA</name>
    <name type="ordered locus">CTC_01866</name>
</gene>
<sequence>MKFHIGKDGEVKIILVYKNAEKVEEANDLYSYLKEKELFKGDLGEVYSHISHSEDKFILLGIGEKEKTTANSLRKAFFNAGKELMKFKVTSIKISIPMFKNLKYESIVQSITEGLLQSEYSFEKYLTKKKISPSIKNVYLDILEEKKEETINTINESKNLIEGIFLARNLVNEPAIYMTPTVLANNAKNQLESLGVEVKIYGKEKIKELGMEAFLAVSKGSFEESQLIVMNYKGNSNSDKKLALVGKGLTYDSGGYSIKPTSSMINMHSDMAGSASVIGAMKAIAMSKLEVNVVAIVAACENMISGGAYKPGDIISSMSGKTIEILNTDAEGRLTLADALWYAVDVVKADKIIDIATLTGACVTALGSINTGAITNNSYLMDNVKKASECAGEPVWEFPNNDEYKELIKGTFGDLKNSSGREAGAITAGMFLQEFVGNTPWVHLDVAGTAYLSSKNGYLQKGATGVPVKTLYYLAKGFKNK</sequence>
<keyword id="KW-0031">Aminopeptidase</keyword>
<keyword id="KW-0963">Cytoplasm</keyword>
<keyword id="KW-0378">Hydrolase</keyword>
<keyword id="KW-0464">Manganese</keyword>
<keyword id="KW-0479">Metal-binding</keyword>
<keyword id="KW-0645">Protease</keyword>
<keyword id="KW-1185">Reference proteome</keyword>
<evidence type="ECO:0000255" key="1">
    <source>
        <dbReference type="HAMAP-Rule" id="MF_00181"/>
    </source>
</evidence>